<gene>
    <name evidence="1" type="primary">pyrG</name>
    <name type="ordered locus">SAK_0157</name>
</gene>
<feature type="chain" id="PRO_0000266227" description="CTP synthase">
    <location>
        <begin position="1"/>
        <end position="534"/>
    </location>
</feature>
<feature type="domain" description="Glutamine amidotransferase type-1" evidence="1">
    <location>
        <begin position="292"/>
        <end position="534"/>
    </location>
</feature>
<feature type="region of interest" description="Amidoligase domain" evidence="1">
    <location>
        <begin position="1"/>
        <end position="267"/>
    </location>
</feature>
<feature type="active site" description="Nucleophile; for glutamine hydrolysis" evidence="1">
    <location>
        <position position="381"/>
    </location>
</feature>
<feature type="active site" evidence="1">
    <location>
        <position position="508"/>
    </location>
</feature>
<feature type="active site" evidence="1">
    <location>
        <position position="510"/>
    </location>
</feature>
<feature type="binding site" evidence="1">
    <location>
        <position position="13"/>
    </location>
    <ligand>
        <name>CTP</name>
        <dbReference type="ChEBI" id="CHEBI:37563"/>
        <note>allosteric inhibitor</note>
    </ligand>
</feature>
<feature type="binding site" evidence="1">
    <location>
        <position position="13"/>
    </location>
    <ligand>
        <name>UTP</name>
        <dbReference type="ChEBI" id="CHEBI:46398"/>
    </ligand>
</feature>
<feature type="binding site" evidence="1">
    <location>
        <begin position="14"/>
        <end position="19"/>
    </location>
    <ligand>
        <name>ATP</name>
        <dbReference type="ChEBI" id="CHEBI:30616"/>
    </ligand>
</feature>
<feature type="binding site" evidence="1">
    <location>
        <position position="54"/>
    </location>
    <ligand>
        <name>L-glutamine</name>
        <dbReference type="ChEBI" id="CHEBI:58359"/>
    </ligand>
</feature>
<feature type="binding site" evidence="1">
    <location>
        <position position="71"/>
    </location>
    <ligand>
        <name>ATP</name>
        <dbReference type="ChEBI" id="CHEBI:30616"/>
    </ligand>
</feature>
<feature type="binding site" evidence="1">
    <location>
        <position position="71"/>
    </location>
    <ligand>
        <name>Mg(2+)</name>
        <dbReference type="ChEBI" id="CHEBI:18420"/>
    </ligand>
</feature>
<feature type="binding site" evidence="1">
    <location>
        <position position="141"/>
    </location>
    <ligand>
        <name>Mg(2+)</name>
        <dbReference type="ChEBI" id="CHEBI:18420"/>
    </ligand>
</feature>
<feature type="binding site" evidence="1">
    <location>
        <begin position="148"/>
        <end position="150"/>
    </location>
    <ligand>
        <name>CTP</name>
        <dbReference type="ChEBI" id="CHEBI:37563"/>
        <note>allosteric inhibitor</note>
    </ligand>
</feature>
<feature type="binding site" evidence="1">
    <location>
        <begin position="188"/>
        <end position="193"/>
    </location>
    <ligand>
        <name>CTP</name>
        <dbReference type="ChEBI" id="CHEBI:37563"/>
        <note>allosteric inhibitor</note>
    </ligand>
</feature>
<feature type="binding site" evidence="1">
    <location>
        <begin position="188"/>
        <end position="193"/>
    </location>
    <ligand>
        <name>UTP</name>
        <dbReference type="ChEBI" id="CHEBI:46398"/>
    </ligand>
</feature>
<feature type="binding site" evidence="1">
    <location>
        <position position="224"/>
    </location>
    <ligand>
        <name>CTP</name>
        <dbReference type="ChEBI" id="CHEBI:37563"/>
        <note>allosteric inhibitor</note>
    </ligand>
</feature>
<feature type="binding site" evidence="1">
    <location>
        <position position="224"/>
    </location>
    <ligand>
        <name>UTP</name>
        <dbReference type="ChEBI" id="CHEBI:46398"/>
    </ligand>
</feature>
<feature type="binding site" evidence="1">
    <location>
        <position position="354"/>
    </location>
    <ligand>
        <name>L-glutamine</name>
        <dbReference type="ChEBI" id="CHEBI:58359"/>
    </ligand>
</feature>
<feature type="binding site" evidence="1">
    <location>
        <begin position="382"/>
        <end position="385"/>
    </location>
    <ligand>
        <name>L-glutamine</name>
        <dbReference type="ChEBI" id="CHEBI:58359"/>
    </ligand>
</feature>
<feature type="binding site" evidence="1">
    <location>
        <position position="405"/>
    </location>
    <ligand>
        <name>L-glutamine</name>
        <dbReference type="ChEBI" id="CHEBI:58359"/>
    </ligand>
</feature>
<feature type="binding site" evidence="1">
    <location>
        <position position="463"/>
    </location>
    <ligand>
        <name>L-glutamine</name>
        <dbReference type="ChEBI" id="CHEBI:58359"/>
    </ligand>
</feature>
<accession>Q3K3S2</accession>
<comment type="function">
    <text evidence="1">Catalyzes the ATP-dependent amination of UTP to CTP with either L-glutamine or ammonia as the source of nitrogen. Regulates intracellular CTP levels through interactions with the four ribonucleotide triphosphates.</text>
</comment>
<comment type="catalytic activity">
    <reaction evidence="1">
        <text>UTP + L-glutamine + ATP + H2O = CTP + L-glutamate + ADP + phosphate + 2 H(+)</text>
        <dbReference type="Rhea" id="RHEA:26426"/>
        <dbReference type="ChEBI" id="CHEBI:15377"/>
        <dbReference type="ChEBI" id="CHEBI:15378"/>
        <dbReference type="ChEBI" id="CHEBI:29985"/>
        <dbReference type="ChEBI" id="CHEBI:30616"/>
        <dbReference type="ChEBI" id="CHEBI:37563"/>
        <dbReference type="ChEBI" id="CHEBI:43474"/>
        <dbReference type="ChEBI" id="CHEBI:46398"/>
        <dbReference type="ChEBI" id="CHEBI:58359"/>
        <dbReference type="ChEBI" id="CHEBI:456216"/>
        <dbReference type="EC" id="6.3.4.2"/>
    </reaction>
</comment>
<comment type="catalytic activity">
    <reaction evidence="1">
        <text>L-glutamine + H2O = L-glutamate + NH4(+)</text>
        <dbReference type="Rhea" id="RHEA:15889"/>
        <dbReference type="ChEBI" id="CHEBI:15377"/>
        <dbReference type="ChEBI" id="CHEBI:28938"/>
        <dbReference type="ChEBI" id="CHEBI:29985"/>
        <dbReference type="ChEBI" id="CHEBI:58359"/>
    </reaction>
</comment>
<comment type="catalytic activity">
    <reaction evidence="1">
        <text>UTP + NH4(+) + ATP = CTP + ADP + phosphate + 2 H(+)</text>
        <dbReference type="Rhea" id="RHEA:16597"/>
        <dbReference type="ChEBI" id="CHEBI:15378"/>
        <dbReference type="ChEBI" id="CHEBI:28938"/>
        <dbReference type="ChEBI" id="CHEBI:30616"/>
        <dbReference type="ChEBI" id="CHEBI:37563"/>
        <dbReference type="ChEBI" id="CHEBI:43474"/>
        <dbReference type="ChEBI" id="CHEBI:46398"/>
        <dbReference type="ChEBI" id="CHEBI:456216"/>
    </reaction>
</comment>
<comment type="activity regulation">
    <text evidence="1">Allosterically activated by GTP, when glutamine is the substrate; GTP has no effect on the reaction when ammonia is the substrate. The allosteric effector GTP functions by stabilizing the protein conformation that binds the tetrahedral intermediate(s) formed during glutamine hydrolysis. Inhibited by the product CTP, via allosteric rather than competitive inhibition.</text>
</comment>
<comment type="pathway">
    <text evidence="1">Pyrimidine metabolism; CTP biosynthesis via de novo pathway; CTP from UDP: step 2/2.</text>
</comment>
<comment type="subunit">
    <text evidence="1">Homotetramer.</text>
</comment>
<comment type="miscellaneous">
    <text evidence="1">CTPSs have evolved a hybrid strategy for distinguishing between UTP and CTP. The overlapping regions of the product feedback inhibitory and substrate sites recognize a common feature in both compounds, the triphosphate moiety. To differentiate isosteric substrate and product pyrimidine rings, an additional pocket far from the expected kinase/ligase catalytic site, specifically recognizes the cytosine and ribose portions of the product inhibitor.</text>
</comment>
<comment type="similarity">
    <text evidence="1">Belongs to the CTP synthase family.</text>
</comment>
<proteinExistence type="inferred from homology"/>
<organism>
    <name type="scientific">Streptococcus agalactiae serotype Ia (strain ATCC 27591 / A909 / CDC SS700)</name>
    <dbReference type="NCBI Taxonomy" id="205921"/>
    <lineage>
        <taxon>Bacteria</taxon>
        <taxon>Bacillati</taxon>
        <taxon>Bacillota</taxon>
        <taxon>Bacilli</taxon>
        <taxon>Lactobacillales</taxon>
        <taxon>Streptococcaceae</taxon>
        <taxon>Streptococcus</taxon>
    </lineage>
</organism>
<sequence>MTKYIFVTGGVVSSIGKGIVAASLGRLLKNRGLKVTIQKFDPYINIDPGTMSPYQHGEVYVTDDGAETDLDLGHYERFIDINLNKYSNVTTGKIYSEVLKKERRGEYLGATVQVIPHVTDALKEKIKRAATTTDSDVIITEVGGTVGDIESLPFLEALRQMKADVGSDNVMYIHTTLLPYLKAAGEMKTKPTQHSVKELRGLGIQPNMLVIRTEQPAGQSIKNKLAQFCDVAPEAVIESLDVDHIYQIPLNMQAQNMDQIVCDHLKLETPAADMTEWSAMVDKVMNLEKKVKIALVGKYVELPDAYLSVVEALKHSGYVNDVAIDLKWVNAAEVTEDNIKELVGDADGIIVPGGFGQRGSEGKIEAIRYARENDVPMLGVCLGMQLTCVEFARNVLKLHGANSAELDPKTPFPIIDIMRDQIDIEDMGGTLRLGLYPCKLKAGSRAAAAYNNQEVVQRRHRHRYEFNTKFREQFEAAGFVFSGVSPDNRLMEVVELPEKKFFVAAQYHPELQSRPNHAEELYTAFVTAAVENMK</sequence>
<dbReference type="EC" id="6.3.4.2" evidence="1"/>
<dbReference type="EMBL" id="CP000114">
    <property type="protein sequence ID" value="ABA46157.1"/>
    <property type="molecule type" value="Genomic_DNA"/>
</dbReference>
<dbReference type="RefSeq" id="WP_000170432.1">
    <property type="nucleotide sequence ID" value="NC_007432.1"/>
</dbReference>
<dbReference type="SMR" id="Q3K3S2"/>
<dbReference type="KEGG" id="sak:SAK_0157"/>
<dbReference type="HOGENOM" id="CLU_011675_5_0_9"/>
<dbReference type="UniPathway" id="UPA00159">
    <property type="reaction ID" value="UER00277"/>
</dbReference>
<dbReference type="GO" id="GO:0005829">
    <property type="term" value="C:cytosol"/>
    <property type="evidence" value="ECO:0007669"/>
    <property type="project" value="TreeGrafter"/>
</dbReference>
<dbReference type="GO" id="GO:0005524">
    <property type="term" value="F:ATP binding"/>
    <property type="evidence" value="ECO:0007669"/>
    <property type="project" value="UniProtKB-KW"/>
</dbReference>
<dbReference type="GO" id="GO:0003883">
    <property type="term" value="F:CTP synthase activity"/>
    <property type="evidence" value="ECO:0007669"/>
    <property type="project" value="UniProtKB-UniRule"/>
</dbReference>
<dbReference type="GO" id="GO:0004359">
    <property type="term" value="F:glutaminase activity"/>
    <property type="evidence" value="ECO:0007669"/>
    <property type="project" value="RHEA"/>
</dbReference>
<dbReference type="GO" id="GO:0042802">
    <property type="term" value="F:identical protein binding"/>
    <property type="evidence" value="ECO:0007669"/>
    <property type="project" value="TreeGrafter"/>
</dbReference>
<dbReference type="GO" id="GO:0046872">
    <property type="term" value="F:metal ion binding"/>
    <property type="evidence" value="ECO:0007669"/>
    <property type="project" value="UniProtKB-KW"/>
</dbReference>
<dbReference type="GO" id="GO:0044210">
    <property type="term" value="P:'de novo' CTP biosynthetic process"/>
    <property type="evidence" value="ECO:0007669"/>
    <property type="project" value="UniProtKB-UniRule"/>
</dbReference>
<dbReference type="GO" id="GO:0019856">
    <property type="term" value="P:pyrimidine nucleobase biosynthetic process"/>
    <property type="evidence" value="ECO:0007669"/>
    <property type="project" value="TreeGrafter"/>
</dbReference>
<dbReference type="CDD" id="cd03113">
    <property type="entry name" value="CTPS_N"/>
    <property type="match status" value="1"/>
</dbReference>
<dbReference type="CDD" id="cd01746">
    <property type="entry name" value="GATase1_CTP_Synthase"/>
    <property type="match status" value="1"/>
</dbReference>
<dbReference type="FunFam" id="3.40.50.300:FF:000009">
    <property type="entry name" value="CTP synthase"/>
    <property type="match status" value="1"/>
</dbReference>
<dbReference type="FunFam" id="3.40.50.880:FF:000002">
    <property type="entry name" value="CTP synthase"/>
    <property type="match status" value="1"/>
</dbReference>
<dbReference type="Gene3D" id="3.40.50.880">
    <property type="match status" value="1"/>
</dbReference>
<dbReference type="Gene3D" id="3.40.50.300">
    <property type="entry name" value="P-loop containing nucleotide triphosphate hydrolases"/>
    <property type="match status" value="1"/>
</dbReference>
<dbReference type="HAMAP" id="MF_01227">
    <property type="entry name" value="PyrG"/>
    <property type="match status" value="1"/>
</dbReference>
<dbReference type="InterPro" id="IPR029062">
    <property type="entry name" value="Class_I_gatase-like"/>
</dbReference>
<dbReference type="InterPro" id="IPR004468">
    <property type="entry name" value="CTP_synthase"/>
</dbReference>
<dbReference type="InterPro" id="IPR017456">
    <property type="entry name" value="CTP_synthase_N"/>
</dbReference>
<dbReference type="InterPro" id="IPR017926">
    <property type="entry name" value="GATASE"/>
</dbReference>
<dbReference type="InterPro" id="IPR033828">
    <property type="entry name" value="GATase1_CTP_Synthase"/>
</dbReference>
<dbReference type="InterPro" id="IPR027417">
    <property type="entry name" value="P-loop_NTPase"/>
</dbReference>
<dbReference type="NCBIfam" id="NF003792">
    <property type="entry name" value="PRK05380.1"/>
    <property type="match status" value="1"/>
</dbReference>
<dbReference type="NCBIfam" id="TIGR00337">
    <property type="entry name" value="PyrG"/>
    <property type="match status" value="1"/>
</dbReference>
<dbReference type="PANTHER" id="PTHR11550">
    <property type="entry name" value="CTP SYNTHASE"/>
    <property type="match status" value="1"/>
</dbReference>
<dbReference type="PANTHER" id="PTHR11550:SF0">
    <property type="entry name" value="CTP SYNTHASE-RELATED"/>
    <property type="match status" value="1"/>
</dbReference>
<dbReference type="Pfam" id="PF06418">
    <property type="entry name" value="CTP_synth_N"/>
    <property type="match status" value="1"/>
</dbReference>
<dbReference type="Pfam" id="PF00117">
    <property type="entry name" value="GATase"/>
    <property type="match status" value="1"/>
</dbReference>
<dbReference type="SUPFAM" id="SSF52317">
    <property type="entry name" value="Class I glutamine amidotransferase-like"/>
    <property type="match status" value="1"/>
</dbReference>
<dbReference type="SUPFAM" id="SSF52540">
    <property type="entry name" value="P-loop containing nucleoside triphosphate hydrolases"/>
    <property type="match status" value="1"/>
</dbReference>
<dbReference type="PROSITE" id="PS51273">
    <property type="entry name" value="GATASE_TYPE_1"/>
    <property type="match status" value="1"/>
</dbReference>
<evidence type="ECO:0000255" key="1">
    <source>
        <dbReference type="HAMAP-Rule" id="MF_01227"/>
    </source>
</evidence>
<keyword id="KW-0067">ATP-binding</keyword>
<keyword id="KW-0315">Glutamine amidotransferase</keyword>
<keyword id="KW-0436">Ligase</keyword>
<keyword id="KW-0460">Magnesium</keyword>
<keyword id="KW-0479">Metal-binding</keyword>
<keyword id="KW-0547">Nucleotide-binding</keyword>
<keyword id="KW-0665">Pyrimidine biosynthesis</keyword>
<protein>
    <recommendedName>
        <fullName evidence="1">CTP synthase</fullName>
        <ecNumber evidence="1">6.3.4.2</ecNumber>
    </recommendedName>
    <alternativeName>
        <fullName evidence="1">Cytidine 5'-triphosphate synthase</fullName>
    </alternativeName>
    <alternativeName>
        <fullName evidence="1">Cytidine triphosphate synthetase</fullName>
        <shortName evidence="1">CTP synthetase</shortName>
        <shortName evidence="1">CTPS</shortName>
    </alternativeName>
    <alternativeName>
        <fullName evidence="1">UTP--ammonia ligase</fullName>
    </alternativeName>
</protein>
<reference key="1">
    <citation type="journal article" date="2005" name="Proc. Natl. Acad. Sci. U.S.A.">
        <title>Genome analysis of multiple pathogenic isolates of Streptococcus agalactiae: implications for the microbial 'pan-genome'.</title>
        <authorList>
            <person name="Tettelin H."/>
            <person name="Masignani V."/>
            <person name="Cieslewicz M.J."/>
            <person name="Donati C."/>
            <person name="Medini D."/>
            <person name="Ward N.L."/>
            <person name="Angiuoli S.V."/>
            <person name="Crabtree J."/>
            <person name="Jones A.L."/>
            <person name="Durkin A.S."/>
            <person name="DeBoy R.T."/>
            <person name="Davidsen T.M."/>
            <person name="Mora M."/>
            <person name="Scarselli M."/>
            <person name="Margarit y Ros I."/>
            <person name="Peterson J.D."/>
            <person name="Hauser C.R."/>
            <person name="Sundaram J.P."/>
            <person name="Nelson W.C."/>
            <person name="Madupu R."/>
            <person name="Brinkac L.M."/>
            <person name="Dodson R.J."/>
            <person name="Rosovitz M.J."/>
            <person name="Sullivan S.A."/>
            <person name="Daugherty S.C."/>
            <person name="Haft D.H."/>
            <person name="Selengut J."/>
            <person name="Gwinn M.L."/>
            <person name="Zhou L."/>
            <person name="Zafar N."/>
            <person name="Khouri H."/>
            <person name="Radune D."/>
            <person name="Dimitrov G."/>
            <person name="Watkins K."/>
            <person name="O'Connor K.J."/>
            <person name="Smith S."/>
            <person name="Utterback T.R."/>
            <person name="White O."/>
            <person name="Rubens C.E."/>
            <person name="Grandi G."/>
            <person name="Madoff L.C."/>
            <person name="Kasper D.L."/>
            <person name="Telford J.L."/>
            <person name="Wessels M.R."/>
            <person name="Rappuoli R."/>
            <person name="Fraser C.M."/>
        </authorList>
    </citation>
    <scope>NUCLEOTIDE SEQUENCE [LARGE SCALE GENOMIC DNA]</scope>
    <source>
        <strain>ATCC 27591 / A909 / CDC SS700</strain>
    </source>
</reference>
<name>PYRG_STRA1</name>